<dbReference type="EMBL" id="AK097543">
    <property type="protein sequence ID" value="BAC05095.1"/>
    <property type="molecule type" value="mRNA"/>
</dbReference>
<dbReference type="EMBL" id="AP002833">
    <property type="status" value="NOT_ANNOTATED_CDS"/>
    <property type="molecule type" value="Genomic_DNA"/>
</dbReference>
<dbReference type="EMBL" id="BC113593">
    <property type="protein sequence ID" value="AAI13594.1"/>
    <property type="molecule type" value="mRNA"/>
</dbReference>
<dbReference type="SMR" id="Q8N7Y1"/>
<dbReference type="IntAct" id="Q8N7Y1">
    <property type="interactions" value="1"/>
</dbReference>
<dbReference type="GlyGen" id="Q8N7Y1">
    <property type="glycosylation" value="1 site"/>
</dbReference>
<dbReference type="BioMuta" id="HGNC:26855"/>
<dbReference type="DMDM" id="74729312"/>
<dbReference type="MassIVE" id="Q8N7Y1"/>
<dbReference type="AGR" id="HGNC:26855"/>
<dbReference type="GeneCards" id="KIRREL3-AS3"/>
<dbReference type="HGNC" id="HGNC:26855">
    <property type="gene designation" value="KIRREL3-AS3"/>
</dbReference>
<dbReference type="neXtProt" id="NX_Q8N7Y1"/>
<dbReference type="InParanoid" id="Q8N7Y1"/>
<dbReference type="PAN-GO" id="Q8N7Y1">
    <property type="GO annotations" value="0 GO annotations based on evolutionary models"/>
</dbReference>
<dbReference type="PathwayCommons" id="Q8N7Y1"/>
<dbReference type="SignaLink" id="Q8N7Y1"/>
<dbReference type="Pharos" id="Q8N7Y1">
    <property type="development level" value="Tdark"/>
</dbReference>
<dbReference type="PRO" id="PR:Q8N7Y1"/>
<dbReference type="Proteomes" id="UP000005640">
    <property type="component" value="Unplaced"/>
</dbReference>
<dbReference type="RNAct" id="Q8N7Y1">
    <property type="molecule type" value="protein"/>
</dbReference>
<protein>
    <recommendedName>
        <fullName>Putative uncharacterized protein KIRREL3-AS3</fullName>
    </recommendedName>
    <alternativeName>
        <fullName>KIRREL3 antisense RNA 1</fullName>
    </alternativeName>
    <alternativeName>
        <fullName>KIRREL3 antisense gene protein 1</fullName>
    </alternativeName>
    <alternativeName>
        <fullName>Proline-rich protein 10</fullName>
    </alternativeName>
</protein>
<sequence>MEKRGESLDLGVRCKRGEERDRRPCWKPSRPGAARGGRGLWTVGGGGSPTETAESQQLGKPPEFWVSAHPGWLQVSCAHRASRWDASRWHPLQRFFARRGVRRPNPSVPSPLPKPPVPSAGSCEPLAPPPTSASGASRSWVTQTLAEAGAYRGCRPAPGSAAGWPRSDRRARLPRKASKPCSPALPSLAACCPQGFLRSGTKRVMCKVLGPGAGVRGTAVECSEQAGVWAHCRPQLTATFS</sequence>
<accession>Q8N7Y1</accession>
<accession>Q14CX1</accession>
<name>KIAS3_HUMAN</name>
<evidence type="ECO:0000256" key="1">
    <source>
        <dbReference type="SAM" id="MobiDB-lite"/>
    </source>
</evidence>
<evidence type="ECO:0000305" key="2"/>
<reference key="1">
    <citation type="journal article" date="2004" name="Nat. Genet.">
        <title>Complete sequencing and characterization of 21,243 full-length human cDNAs.</title>
        <authorList>
            <person name="Ota T."/>
            <person name="Suzuki Y."/>
            <person name="Nishikawa T."/>
            <person name="Otsuki T."/>
            <person name="Sugiyama T."/>
            <person name="Irie R."/>
            <person name="Wakamatsu A."/>
            <person name="Hayashi K."/>
            <person name="Sato H."/>
            <person name="Nagai K."/>
            <person name="Kimura K."/>
            <person name="Makita H."/>
            <person name="Sekine M."/>
            <person name="Obayashi M."/>
            <person name="Nishi T."/>
            <person name="Shibahara T."/>
            <person name="Tanaka T."/>
            <person name="Ishii S."/>
            <person name="Yamamoto J."/>
            <person name="Saito K."/>
            <person name="Kawai Y."/>
            <person name="Isono Y."/>
            <person name="Nakamura Y."/>
            <person name="Nagahari K."/>
            <person name="Murakami K."/>
            <person name="Yasuda T."/>
            <person name="Iwayanagi T."/>
            <person name="Wagatsuma M."/>
            <person name="Shiratori A."/>
            <person name="Sudo H."/>
            <person name="Hosoiri T."/>
            <person name="Kaku Y."/>
            <person name="Kodaira H."/>
            <person name="Kondo H."/>
            <person name="Sugawara M."/>
            <person name="Takahashi M."/>
            <person name="Kanda K."/>
            <person name="Yokoi T."/>
            <person name="Furuya T."/>
            <person name="Kikkawa E."/>
            <person name="Omura Y."/>
            <person name="Abe K."/>
            <person name="Kamihara K."/>
            <person name="Katsuta N."/>
            <person name="Sato K."/>
            <person name="Tanikawa M."/>
            <person name="Yamazaki M."/>
            <person name="Ninomiya K."/>
            <person name="Ishibashi T."/>
            <person name="Yamashita H."/>
            <person name="Murakawa K."/>
            <person name="Fujimori K."/>
            <person name="Tanai H."/>
            <person name="Kimata M."/>
            <person name="Watanabe M."/>
            <person name="Hiraoka S."/>
            <person name="Chiba Y."/>
            <person name="Ishida S."/>
            <person name="Ono Y."/>
            <person name="Takiguchi S."/>
            <person name="Watanabe S."/>
            <person name="Yosida M."/>
            <person name="Hotuta T."/>
            <person name="Kusano J."/>
            <person name="Kanehori K."/>
            <person name="Takahashi-Fujii A."/>
            <person name="Hara H."/>
            <person name="Tanase T.-O."/>
            <person name="Nomura Y."/>
            <person name="Togiya S."/>
            <person name="Komai F."/>
            <person name="Hara R."/>
            <person name="Takeuchi K."/>
            <person name="Arita M."/>
            <person name="Imose N."/>
            <person name="Musashino K."/>
            <person name="Yuuki H."/>
            <person name="Oshima A."/>
            <person name="Sasaki N."/>
            <person name="Aotsuka S."/>
            <person name="Yoshikawa Y."/>
            <person name="Matsunawa H."/>
            <person name="Ichihara T."/>
            <person name="Shiohata N."/>
            <person name="Sano S."/>
            <person name="Moriya S."/>
            <person name="Momiyama H."/>
            <person name="Satoh N."/>
            <person name="Takami S."/>
            <person name="Terashima Y."/>
            <person name="Suzuki O."/>
            <person name="Nakagawa S."/>
            <person name="Senoh A."/>
            <person name="Mizoguchi H."/>
            <person name="Goto Y."/>
            <person name="Shimizu F."/>
            <person name="Wakebe H."/>
            <person name="Hishigaki H."/>
            <person name="Watanabe T."/>
            <person name="Sugiyama A."/>
            <person name="Takemoto M."/>
            <person name="Kawakami B."/>
            <person name="Yamazaki M."/>
            <person name="Watanabe K."/>
            <person name="Kumagai A."/>
            <person name="Itakura S."/>
            <person name="Fukuzumi Y."/>
            <person name="Fujimori Y."/>
            <person name="Komiyama M."/>
            <person name="Tashiro H."/>
            <person name="Tanigami A."/>
            <person name="Fujiwara T."/>
            <person name="Ono T."/>
            <person name="Yamada K."/>
            <person name="Fujii Y."/>
            <person name="Ozaki K."/>
            <person name="Hirao M."/>
            <person name="Ohmori Y."/>
            <person name="Kawabata A."/>
            <person name="Hikiji T."/>
            <person name="Kobatake N."/>
            <person name="Inagaki H."/>
            <person name="Ikema Y."/>
            <person name="Okamoto S."/>
            <person name="Okitani R."/>
            <person name="Kawakami T."/>
            <person name="Noguchi S."/>
            <person name="Itoh T."/>
            <person name="Shigeta K."/>
            <person name="Senba T."/>
            <person name="Matsumura K."/>
            <person name="Nakajima Y."/>
            <person name="Mizuno T."/>
            <person name="Morinaga M."/>
            <person name="Sasaki M."/>
            <person name="Togashi T."/>
            <person name="Oyama M."/>
            <person name="Hata H."/>
            <person name="Watanabe M."/>
            <person name="Komatsu T."/>
            <person name="Mizushima-Sugano J."/>
            <person name="Satoh T."/>
            <person name="Shirai Y."/>
            <person name="Takahashi Y."/>
            <person name="Nakagawa K."/>
            <person name="Okumura K."/>
            <person name="Nagase T."/>
            <person name="Nomura N."/>
            <person name="Kikuchi H."/>
            <person name="Masuho Y."/>
            <person name="Yamashita R."/>
            <person name="Nakai K."/>
            <person name="Yada T."/>
            <person name="Nakamura Y."/>
            <person name="Ohara O."/>
            <person name="Isogai T."/>
            <person name="Sugano S."/>
        </authorList>
    </citation>
    <scope>NUCLEOTIDE SEQUENCE [LARGE SCALE MRNA]</scope>
    <source>
        <tissue>Testis</tissue>
    </source>
</reference>
<reference key="2">
    <citation type="journal article" date="2006" name="Nature">
        <title>Human chromosome 11 DNA sequence and analysis including novel gene identification.</title>
        <authorList>
            <person name="Taylor T.D."/>
            <person name="Noguchi H."/>
            <person name="Totoki Y."/>
            <person name="Toyoda A."/>
            <person name="Kuroki Y."/>
            <person name="Dewar K."/>
            <person name="Lloyd C."/>
            <person name="Itoh T."/>
            <person name="Takeda T."/>
            <person name="Kim D.-W."/>
            <person name="She X."/>
            <person name="Barlow K.F."/>
            <person name="Bloom T."/>
            <person name="Bruford E."/>
            <person name="Chang J.L."/>
            <person name="Cuomo C.A."/>
            <person name="Eichler E."/>
            <person name="FitzGerald M.G."/>
            <person name="Jaffe D.B."/>
            <person name="LaButti K."/>
            <person name="Nicol R."/>
            <person name="Park H.-S."/>
            <person name="Seaman C."/>
            <person name="Sougnez C."/>
            <person name="Yang X."/>
            <person name="Zimmer A.R."/>
            <person name="Zody M.C."/>
            <person name="Birren B.W."/>
            <person name="Nusbaum C."/>
            <person name="Fujiyama A."/>
            <person name="Hattori M."/>
            <person name="Rogers J."/>
            <person name="Lander E.S."/>
            <person name="Sakaki Y."/>
        </authorList>
    </citation>
    <scope>NUCLEOTIDE SEQUENCE [LARGE SCALE GENOMIC DNA]</scope>
</reference>
<reference key="3">
    <citation type="journal article" date="2004" name="Genome Res.">
        <title>The status, quality, and expansion of the NIH full-length cDNA project: the Mammalian Gene Collection (MGC).</title>
        <authorList>
            <consortium name="The MGC Project Team"/>
        </authorList>
    </citation>
    <scope>NUCLEOTIDE SEQUENCE [LARGE SCALE MRNA]</scope>
</reference>
<feature type="chain" id="PRO_0000243942" description="Putative uncharacterized protein KIRREL3-AS3">
    <location>
        <begin position="1"/>
        <end position="241"/>
    </location>
</feature>
<feature type="region of interest" description="Disordered" evidence="1">
    <location>
        <begin position="19"/>
        <end position="59"/>
    </location>
</feature>
<feature type="region of interest" description="Disordered" evidence="1">
    <location>
        <begin position="101"/>
        <end position="139"/>
    </location>
</feature>
<feature type="region of interest" description="Disordered" evidence="1">
    <location>
        <begin position="152"/>
        <end position="182"/>
    </location>
</feature>
<feature type="compositionally biased region" description="Gly residues" evidence="1">
    <location>
        <begin position="34"/>
        <end position="48"/>
    </location>
</feature>
<feature type="compositionally biased region" description="Polar residues" evidence="1">
    <location>
        <begin position="49"/>
        <end position="58"/>
    </location>
</feature>
<feature type="compositionally biased region" description="Pro residues" evidence="1">
    <location>
        <begin position="106"/>
        <end position="118"/>
    </location>
</feature>
<gene>
    <name type="primary">KIRREL3-AS3</name>
    <name type="synonym">NCRNA00288</name>
    <name type="synonym">PRR10</name>
</gene>
<organism>
    <name type="scientific">Homo sapiens</name>
    <name type="common">Human</name>
    <dbReference type="NCBI Taxonomy" id="9606"/>
    <lineage>
        <taxon>Eukaryota</taxon>
        <taxon>Metazoa</taxon>
        <taxon>Chordata</taxon>
        <taxon>Craniata</taxon>
        <taxon>Vertebrata</taxon>
        <taxon>Euteleostomi</taxon>
        <taxon>Mammalia</taxon>
        <taxon>Eutheria</taxon>
        <taxon>Euarchontoglires</taxon>
        <taxon>Primates</taxon>
        <taxon>Haplorrhini</taxon>
        <taxon>Catarrhini</taxon>
        <taxon>Hominidae</taxon>
        <taxon>Homo</taxon>
    </lineage>
</organism>
<comment type="interaction">
    <interactant intactId="EBI-10267656">
        <id>Q8N7Y1</id>
    </interactant>
    <interactant intactId="EBI-348380">
        <id>P25788</id>
        <label>PSMA3</label>
    </interactant>
    <organismsDiffer>false</organismsDiffer>
    <experiments>3</experiments>
</comment>
<comment type="caution">
    <text evidence="2">Product of a dubious CDS prediction. May be a non-coding RNA.</text>
</comment>
<proteinExistence type="uncertain"/>
<keyword id="KW-1185">Reference proteome</keyword>